<name>MU134_SCHPO</name>
<reference key="1">
    <citation type="journal article" date="2002" name="Nature">
        <title>The genome sequence of Schizosaccharomyces pombe.</title>
        <authorList>
            <person name="Wood V."/>
            <person name="Gwilliam R."/>
            <person name="Rajandream M.A."/>
            <person name="Lyne M.H."/>
            <person name="Lyne R."/>
            <person name="Stewart A."/>
            <person name="Sgouros J.G."/>
            <person name="Peat N."/>
            <person name="Hayles J."/>
            <person name="Baker S.G."/>
            <person name="Basham D."/>
            <person name="Bowman S."/>
            <person name="Brooks K."/>
            <person name="Brown D."/>
            <person name="Brown S."/>
            <person name="Chillingworth T."/>
            <person name="Churcher C.M."/>
            <person name="Collins M."/>
            <person name="Connor R."/>
            <person name="Cronin A."/>
            <person name="Davis P."/>
            <person name="Feltwell T."/>
            <person name="Fraser A."/>
            <person name="Gentles S."/>
            <person name="Goble A."/>
            <person name="Hamlin N."/>
            <person name="Harris D.E."/>
            <person name="Hidalgo J."/>
            <person name="Hodgson G."/>
            <person name="Holroyd S."/>
            <person name="Hornsby T."/>
            <person name="Howarth S."/>
            <person name="Huckle E.J."/>
            <person name="Hunt S."/>
            <person name="Jagels K."/>
            <person name="James K.D."/>
            <person name="Jones L."/>
            <person name="Jones M."/>
            <person name="Leather S."/>
            <person name="McDonald S."/>
            <person name="McLean J."/>
            <person name="Mooney P."/>
            <person name="Moule S."/>
            <person name="Mungall K.L."/>
            <person name="Murphy L.D."/>
            <person name="Niblett D."/>
            <person name="Odell C."/>
            <person name="Oliver K."/>
            <person name="O'Neil S."/>
            <person name="Pearson D."/>
            <person name="Quail M.A."/>
            <person name="Rabbinowitsch E."/>
            <person name="Rutherford K.M."/>
            <person name="Rutter S."/>
            <person name="Saunders D."/>
            <person name="Seeger K."/>
            <person name="Sharp S."/>
            <person name="Skelton J."/>
            <person name="Simmonds M.N."/>
            <person name="Squares R."/>
            <person name="Squares S."/>
            <person name="Stevens K."/>
            <person name="Taylor K."/>
            <person name="Taylor R.G."/>
            <person name="Tivey A."/>
            <person name="Walsh S.V."/>
            <person name="Warren T."/>
            <person name="Whitehead S."/>
            <person name="Woodward J.R."/>
            <person name="Volckaert G."/>
            <person name="Aert R."/>
            <person name="Robben J."/>
            <person name="Grymonprez B."/>
            <person name="Weltjens I."/>
            <person name="Vanstreels E."/>
            <person name="Rieger M."/>
            <person name="Schaefer M."/>
            <person name="Mueller-Auer S."/>
            <person name="Gabel C."/>
            <person name="Fuchs M."/>
            <person name="Duesterhoeft A."/>
            <person name="Fritzc C."/>
            <person name="Holzer E."/>
            <person name="Moestl D."/>
            <person name="Hilbert H."/>
            <person name="Borzym K."/>
            <person name="Langer I."/>
            <person name="Beck A."/>
            <person name="Lehrach H."/>
            <person name="Reinhardt R."/>
            <person name="Pohl T.M."/>
            <person name="Eger P."/>
            <person name="Zimmermann W."/>
            <person name="Wedler H."/>
            <person name="Wambutt R."/>
            <person name="Purnelle B."/>
            <person name="Goffeau A."/>
            <person name="Cadieu E."/>
            <person name="Dreano S."/>
            <person name="Gloux S."/>
            <person name="Lelaure V."/>
            <person name="Mottier S."/>
            <person name="Galibert F."/>
            <person name="Aves S.J."/>
            <person name="Xiang Z."/>
            <person name="Hunt C."/>
            <person name="Moore K."/>
            <person name="Hurst S.M."/>
            <person name="Lucas M."/>
            <person name="Rochet M."/>
            <person name="Gaillardin C."/>
            <person name="Tallada V.A."/>
            <person name="Garzon A."/>
            <person name="Thode G."/>
            <person name="Daga R.R."/>
            <person name="Cruzado L."/>
            <person name="Jimenez J."/>
            <person name="Sanchez M."/>
            <person name="del Rey F."/>
            <person name="Benito J."/>
            <person name="Dominguez A."/>
            <person name="Revuelta J.L."/>
            <person name="Moreno S."/>
            <person name="Armstrong J."/>
            <person name="Forsburg S.L."/>
            <person name="Cerutti L."/>
            <person name="Lowe T."/>
            <person name="McCombie W.R."/>
            <person name="Paulsen I."/>
            <person name="Potashkin J."/>
            <person name="Shpakovski G.V."/>
            <person name="Ussery D."/>
            <person name="Barrell B.G."/>
            <person name="Nurse P."/>
        </authorList>
    </citation>
    <scope>NUCLEOTIDE SEQUENCE [LARGE SCALE GENOMIC DNA]</scope>
    <source>
        <strain>972 / ATCC 24843</strain>
    </source>
</reference>
<reference key="2">
    <citation type="journal article" date="2005" name="Curr. Biol.">
        <title>A large-scale screen in S. pombe identifies seven novel genes required for critical meiotic events.</title>
        <authorList>
            <person name="Martin-Castellanos C."/>
            <person name="Blanco M."/>
            <person name="Rozalen A.E."/>
            <person name="Perez-Hidalgo L."/>
            <person name="Garcia A.I."/>
            <person name="Conde F."/>
            <person name="Mata J."/>
            <person name="Ellermeier C."/>
            <person name="Davis L."/>
            <person name="San-Segundo P."/>
            <person name="Smith G.R."/>
            <person name="Moreno S."/>
        </authorList>
    </citation>
    <scope>FUNCTION IN MEIOSIS</scope>
</reference>
<reference key="3">
    <citation type="journal article" date="2006" name="Nat. Biotechnol.">
        <title>ORFeome cloning and global analysis of protein localization in the fission yeast Schizosaccharomyces pombe.</title>
        <authorList>
            <person name="Matsuyama A."/>
            <person name="Arai R."/>
            <person name="Yashiroda Y."/>
            <person name="Shirai A."/>
            <person name="Kamata A."/>
            <person name="Sekido S."/>
            <person name="Kobayashi Y."/>
            <person name="Hashimoto A."/>
            <person name="Hamamoto M."/>
            <person name="Hiraoka Y."/>
            <person name="Horinouchi S."/>
            <person name="Yoshida M."/>
        </authorList>
    </citation>
    <scope>SUBCELLULAR LOCATION [LARGE SCALE ANALYSIS]</scope>
</reference>
<proteinExistence type="evidence at protein level"/>
<accession>O42654</accession>
<dbReference type="EMBL" id="CU329670">
    <property type="protein sequence ID" value="CAA15728.1"/>
    <property type="molecule type" value="Genomic_DNA"/>
</dbReference>
<dbReference type="PIR" id="T37509">
    <property type="entry name" value="T37509"/>
</dbReference>
<dbReference type="RefSeq" id="NP_593266.1">
    <property type="nucleotide sequence ID" value="NM_001018663.2"/>
</dbReference>
<dbReference type="BioGRID" id="279487">
    <property type="interactions" value="5"/>
</dbReference>
<dbReference type="PaxDb" id="4896-SPAC10F6.15.1"/>
<dbReference type="EnsemblFungi" id="SPAC10F6.15.1">
    <property type="protein sequence ID" value="SPAC10F6.15.1:pep"/>
    <property type="gene ID" value="SPAC10F6.15"/>
</dbReference>
<dbReference type="KEGG" id="spo:2543053"/>
<dbReference type="PomBase" id="SPAC10F6.15"/>
<dbReference type="VEuPathDB" id="FungiDB:SPAC10F6.15"/>
<dbReference type="HOGENOM" id="CLU_639613_0_0_1"/>
<dbReference type="InParanoid" id="O42654"/>
<dbReference type="OMA" id="CIRMYLI"/>
<dbReference type="PhylomeDB" id="O42654"/>
<dbReference type="PRO" id="PR:O42654"/>
<dbReference type="Proteomes" id="UP000002485">
    <property type="component" value="Chromosome I"/>
</dbReference>
<dbReference type="GO" id="GO:0005938">
    <property type="term" value="C:cell cortex"/>
    <property type="evidence" value="ECO:0007005"/>
    <property type="project" value="PomBase"/>
</dbReference>
<dbReference type="GO" id="GO:0051321">
    <property type="term" value="P:meiotic cell cycle"/>
    <property type="evidence" value="ECO:0007669"/>
    <property type="project" value="UniProtKB-KW"/>
</dbReference>
<dbReference type="InterPro" id="IPR013903">
    <property type="entry name" value="Meiotic_expression"/>
</dbReference>
<dbReference type="Pfam" id="PF08594">
    <property type="entry name" value="UPF0300"/>
    <property type="match status" value="1"/>
</dbReference>
<feature type="chain" id="PRO_0000118859" description="Meiotically up-regulated gene 134 protein">
    <location>
        <begin position="1"/>
        <end position="432"/>
    </location>
</feature>
<protein>
    <recommendedName>
        <fullName>Meiotically up-regulated gene 134 protein</fullName>
    </recommendedName>
</protein>
<comment type="function">
    <text evidence="1">Has a role in meiosis.</text>
</comment>
<comment type="subcellular location">
    <subcellularLocation>
        <location evidence="2">Cytoplasm</location>
        <location evidence="2">Cell cortex</location>
    </subcellularLocation>
</comment>
<comment type="similarity">
    <text evidence="3">Belongs to the UPF0300 family.</text>
</comment>
<organism>
    <name type="scientific">Schizosaccharomyces pombe (strain 972 / ATCC 24843)</name>
    <name type="common">Fission yeast</name>
    <dbReference type="NCBI Taxonomy" id="284812"/>
    <lineage>
        <taxon>Eukaryota</taxon>
        <taxon>Fungi</taxon>
        <taxon>Dikarya</taxon>
        <taxon>Ascomycota</taxon>
        <taxon>Taphrinomycotina</taxon>
        <taxon>Schizosaccharomycetes</taxon>
        <taxon>Schizosaccharomycetales</taxon>
        <taxon>Schizosaccharomycetaceae</taxon>
        <taxon>Schizosaccharomyces</taxon>
    </lineage>
</organism>
<gene>
    <name type="primary">mug134</name>
    <name type="ORF">SPAC10F6.15</name>
</gene>
<keyword id="KW-0963">Cytoplasm</keyword>
<keyword id="KW-0469">Meiosis</keyword>
<keyword id="KW-1185">Reference proteome</keyword>
<sequence>MNYNANVVKFHSTILHKFALKISKFLILCMRRNKRQLACMKCQCENPMAAITYADIEYPHNTHFLLLDSISWIPCTCKILKLKEFELPDRFDIPNLFYDGWLSYVFHTFSGVYLKIGYEMDESGFCLPDQVYHLIDNHSCIQTAVSHLLRNHQALFKYLCDYLRSGEFPLTVLIHHVMLYQYYPKSLQEALWAAVEHYVNNSGEAYSTVQKLAVQKKIGNIRMYLVNPRDIFALGSTCNCIVVSSSNFQSYVQLRKPLLENNLPYEIDGFDKILQCANSEADIGWIAMIHCIGSNGYAFPIHLYLNMKKNIFLGKLPESTLLLYNSDGAIFKNPPSSKKECDFYNQLLLDLCKCRQFNAEMECNMKKLFNNPTGLHSLPNLPNFSEAGSAKSSNFCSSKDNCLTNRLTLNCLDTPSDENGEDIAIQLIIPAE</sequence>
<evidence type="ECO:0000269" key="1">
    <source>
    </source>
</evidence>
<evidence type="ECO:0000269" key="2">
    <source>
    </source>
</evidence>
<evidence type="ECO:0000305" key="3"/>